<name>AXIN1_DANRE</name>
<sequence length="835" mass="94329">MSMSVNEKGICYLPDLGSSFTEDAPRPPVPGEEGDLVSSDGRQYNHSFYSSKSDSLKNEASIATPRRPDLDLGYEPEGSASPTPPYLKWAESLHSLLDDQDGIHLFRTFLKQEECADMLDFWFACSGFRKQEANDGNEKMLKLAKAIYKKYILDNNGIVSRQIKPATKSFIKDCVTKLHIDPAMFDQAQTEIQTMMEENTYPLFLKSDIYLEYTRTGGESPKLFSDQSSVSGNGKVLPGYLPTVIEDVEWRCDQEEEQIAESDPTPSNRLTQKLPLETVPQRVANSKRYQDNREYRHASWREPVNPYYVNSGYALAPATSANDSEQQSMSSDADTLSLTDSSVDGVPPYRYRKPHRREIHESAKVNGRVPLPHIPRTNRIPKDIHVEPEKFAAELISRLEGVLREREAQEKLEERLKRVRLEEEGDDADISTGPSLANHRVPPAVHVQHYGGRYSEMSYNGLQLRDAHEENPESILDEHVQRVMKTPGCQSPGTGRHSPKSRSPDGLPAGKIPGLMMPLSGGQGKHQARQGPKGEAAHLHHHKHIHHTHYAAAGKPKEQAEAEAARMHGGFAWNTEQHHYGPKSRNYADGMSVGPNTMDPMGYSSKGSTLSKRPVRKGEDGRNFEMREPLPADDMERNQKILQWMMEGEKEAGRYKRGPYGSISGPKKAQGHEPARPSSVERLGAVHPWVTAQLRNNVQPSHPFIQDPTMPPNPAPNPLTQLEEARRRLEEERRKSGTLQAKQRHKNMKKQPCENITVAYYFRGEPIPYRTSVKGRIVTLGQFKELLTKKGSYKYYFKKVSYEFDCGVVFEEVREDDAILPIFEEKIIGKVEKVD</sequence>
<keyword id="KW-0013">ADP-ribosylation</keyword>
<keyword id="KW-1003">Cell membrane</keyword>
<keyword id="KW-0963">Cytoplasm</keyword>
<keyword id="KW-0217">Developmental protein</keyword>
<keyword id="KW-0472">Membrane</keyword>
<keyword id="KW-0539">Nucleus</keyword>
<keyword id="KW-0597">Phosphoprotein</keyword>
<keyword id="KW-1185">Reference proteome</keyword>
<keyword id="KW-0832">Ubl conjugation</keyword>
<keyword id="KW-0879">Wnt signaling pathway</keyword>
<feature type="chain" id="PRO_0000220893" description="Axin-1">
    <location>
        <begin position="1"/>
        <end position="835"/>
    </location>
</feature>
<feature type="domain" description="RGS" evidence="5">
    <location>
        <begin position="92"/>
        <end position="214"/>
    </location>
</feature>
<feature type="domain" description="DIX" evidence="4">
    <location>
        <begin position="753"/>
        <end position="835"/>
    </location>
</feature>
<feature type="region of interest" description="Disordered" evidence="6">
    <location>
        <begin position="16"/>
        <end position="60"/>
    </location>
</feature>
<feature type="region of interest" description="Disordered" evidence="6">
    <location>
        <begin position="318"/>
        <end position="349"/>
    </location>
</feature>
<feature type="region of interest" description="Interaction with GSK3B" evidence="1">
    <location>
        <begin position="351"/>
        <end position="436"/>
    </location>
</feature>
<feature type="region of interest" description="Interaction with beta-catenin" evidence="1">
    <location>
        <begin position="437"/>
        <end position="512"/>
    </location>
</feature>
<feature type="region of interest" description="Disordered" evidence="6">
    <location>
        <begin position="485"/>
        <end position="530"/>
    </location>
</feature>
<feature type="region of interest" description="Disordered" evidence="6">
    <location>
        <begin position="602"/>
        <end position="627"/>
    </location>
</feature>
<feature type="compositionally biased region" description="Polar residues" evidence="6">
    <location>
        <begin position="40"/>
        <end position="53"/>
    </location>
</feature>
<feature type="compositionally biased region" description="Low complexity" evidence="6">
    <location>
        <begin position="328"/>
        <end position="344"/>
    </location>
</feature>
<feature type="compositionally biased region" description="Basic and acidic residues" evidence="6">
    <location>
        <begin position="616"/>
        <end position="627"/>
    </location>
</feature>
<feature type="sequence conflict" description="In Ref. 1; BAA92439." evidence="10" ref="1">
    <original>T</original>
    <variation>M</variation>
    <location>
        <position position="176"/>
    </location>
</feature>
<feature type="sequence conflict" description="In Ref. 1; BAA92439." evidence="10" ref="1">
    <original>P</original>
    <variation>L</variation>
    <location>
        <position position="275"/>
    </location>
</feature>
<feature type="sequence conflict" description="In Ref. 1; BAA92439." evidence="10" ref="1">
    <original>G</original>
    <variation>S</variation>
    <location>
        <position position="658"/>
    </location>
</feature>
<feature type="sequence conflict" description="In Ref. 1; BAA92439." evidence="10" ref="1">
    <original>R</original>
    <variation>C</variation>
    <location>
        <position position="763"/>
    </location>
</feature>
<gene>
    <name type="primary">axin1</name>
    <name type="synonym">axin</name>
</gene>
<accession>P57094</accession>
<accession>Q499B7</accession>
<organism>
    <name type="scientific">Danio rerio</name>
    <name type="common">Zebrafish</name>
    <name type="synonym">Brachydanio rerio</name>
    <dbReference type="NCBI Taxonomy" id="7955"/>
    <lineage>
        <taxon>Eukaryota</taxon>
        <taxon>Metazoa</taxon>
        <taxon>Chordata</taxon>
        <taxon>Craniata</taxon>
        <taxon>Vertebrata</taxon>
        <taxon>Euteleostomi</taxon>
        <taxon>Actinopterygii</taxon>
        <taxon>Neopterygii</taxon>
        <taxon>Teleostei</taxon>
        <taxon>Ostariophysi</taxon>
        <taxon>Cypriniformes</taxon>
        <taxon>Danionidae</taxon>
        <taxon>Danioninae</taxon>
        <taxon>Danio</taxon>
    </lineage>
</organism>
<comment type="function">
    <text evidence="8 9">Component of the beta-catenin destruction complex required for regulating ctnnb1 levels through phosphorylation and ubiquitination, and modulating Wnt-signaling (PubMed:17681137). Controls dorsoventral patterning via two opposing effects: down-regulates ctnnb1 to inhibit the Wnt signaling pathway and ventralize embryos, but also dorsalizes embryos by activating a Wnt-independent JNK signaling pathway (PubMed:17681137, PubMed:30467143).</text>
</comment>
<comment type="subunit">
    <text evidence="3 7 9">Homodimer (By similarity). Interacts with dixdc1 (PubMed:12526749). Interacts with hwa; leading to promote the tankyrase-mediated degradation of axin1 (PubMed:30467143).</text>
</comment>
<comment type="subcellular location">
    <subcellularLocation>
        <location evidence="2">Cytoplasm</location>
    </subcellularLocation>
    <subcellularLocation>
        <location evidence="2">Nucleus</location>
    </subcellularLocation>
    <subcellularLocation>
        <location evidence="3">Membrane</location>
    </subcellularLocation>
    <subcellularLocation>
        <location evidence="3">Cell membrane</location>
    </subcellularLocation>
</comment>
<comment type="domain">
    <text evidence="7">The DIX domain mediates interaction with dixdc1.</text>
</comment>
<comment type="PTM">
    <text evidence="11">ADP-ribosylated by tankyrase tnks and tnks2. Poly-ADP-ribosylated protein is recognized by rnf146, followed by ubiquitination at 'Lys-48' and subsequent activation of the Wnt signaling pathway.</text>
</comment>
<comment type="PTM">
    <text evidence="11">Ubiquitinated by rnf146 when poly-ADP-ribosylated, leading to its degradation and subsequent activation of the Wnt signaling pathway.</text>
</comment>
<proteinExistence type="evidence at protein level"/>
<dbReference type="EMBL" id="AB032262">
    <property type="protein sequence ID" value="BAA92439.1"/>
    <property type="molecule type" value="mRNA"/>
</dbReference>
<dbReference type="EMBL" id="BC099991">
    <property type="protein sequence ID" value="AAH99991.1"/>
    <property type="molecule type" value="mRNA"/>
</dbReference>
<dbReference type="RefSeq" id="NP_571578.2">
    <property type="nucleotide sequence ID" value="NM_131503.2"/>
</dbReference>
<dbReference type="SMR" id="P57094"/>
<dbReference type="BioGRID" id="78941">
    <property type="interactions" value="3"/>
</dbReference>
<dbReference type="ELM" id="P57094"/>
<dbReference type="FunCoup" id="P57094">
    <property type="interactions" value="2208"/>
</dbReference>
<dbReference type="STRING" id="7955.ENSDARP00000135613"/>
<dbReference type="PaxDb" id="7955-ENSDARP00000036978"/>
<dbReference type="GeneID" id="57931"/>
<dbReference type="KEGG" id="dre:57931"/>
<dbReference type="AGR" id="ZFIN:ZDB-GENE-000403-1"/>
<dbReference type="CTD" id="8312"/>
<dbReference type="ZFIN" id="ZDB-GENE-000403-1">
    <property type="gene designation" value="axin1"/>
</dbReference>
<dbReference type="eggNOG" id="KOG3589">
    <property type="taxonomic scope" value="Eukaryota"/>
</dbReference>
<dbReference type="InParanoid" id="P57094"/>
<dbReference type="OrthoDB" id="10007451at2759"/>
<dbReference type="PhylomeDB" id="P57094"/>
<dbReference type="Reactome" id="R-DRE-4641257">
    <property type="pathway name" value="Degradation of AXIN"/>
</dbReference>
<dbReference type="Reactome" id="R-DRE-4641262">
    <property type="pathway name" value="Disassembly of the destruction complex and recruitment of AXIN to the membrane"/>
</dbReference>
<dbReference type="PRO" id="PR:P57094"/>
<dbReference type="Proteomes" id="UP000000437">
    <property type="component" value="Chromosome 3"/>
</dbReference>
<dbReference type="GO" id="GO:0030877">
    <property type="term" value="C:beta-catenin destruction complex"/>
    <property type="evidence" value="ECO:0000314"/>
    <property type="project" value="ZFIN"/>
</dbReference>
<dbReference type="GO" id="GO:0005737">
    <property type="term" value="C:cytoplasm"/>
    <property type="evidence" value="ECO:0007669"/>
    <property type="project" value="UniProtKB-SubCell"/>
</dbReference>
<dbReference type="GO" id="GO:0005634">
    <property type="term" value="C:nucleus"/>
    <property type="evidence" value="ECO:0000318"/>
    <property type="project" value="GO_Central"/>
</dbReference>
<dbReference type="GO" id="GO:0005886">
    <property type="term" value="C:plasma membrane"/>
    <property type="evidence" value="ECO:0000318"/>
    <property type="project" value="GO_Central"/>
</dbReference>
<dbReference type="GO" id="GO:0008013">
    <property type="term" value="F:beta-catenin binding"/>
    <property type="evidence" value="ECO:0000318"/>
    <property type="project" value="GO_Central"/>
</dbReference>
<dbReference type="GO" id="GO:0070411">
    <property type="term" value="F:I-SMAD binding"/>
    <property type="evidence" value="ECO:0000318"/>
    <property type="project" value="GO_Central"/>
</dbReference>
<dbReference type="GO" id="GO:0042802">
    <property type="term" value="F:identical protein binding"/>
    <property type="evidence" value="ECO:0000318"/>
    <property type="project" value="GO_Central"/>
</dbReference>
<dbReference type="GO" id="GO:0060090">
    <property type="term" value="F:molecular adaptor activity"/>
    <property type="evidence" value="ECO:0000318"/>
    <property type="project" value="GO_Central"/>
</dbReference>
<dbReference type="GO" id="GO:0042803">
    <property type="term" value="F:protein homodimerization activity"/>
    <property type="evidence" value="ECO:0000250"/>
    <property type="project" value="UniProtKB"/>
</dbReference>
<dbReference type="GO" id="GO:0019901">
    <property type="term" value="F:protein kinase binding"/>
    <property type="evidence" value="ECO:0000318"/>
    <property type="project" value="GO_Central"/>
</dbReference>
<dbReference type="GO" id="GO:0031625">
    <property type="term" value="F:ubiquitin protein ligase binding"/>
    <property type="evidence" value="ECO:0000318"/>
    <property type="project" value="GO_Central"/>
</dbReference>
<dbReference type="GO" id="GO:0048468">
    <property type="term" value="P:cell development"/>
    <property type="evidence" value="ECO:0000318"/>
    <property type="project" value="GO_Central"/>
</dbReference>
<dbReference type="GO" id="GO:0007368">
    <property type="term" value="P:determination of left/right symmetry"/>
    <property type="evidence" value="ECO:0000315"/>
    <property type="project" value="ZFIN"/>
</dbReference>
<dbReference type="GO" id="GO:0009950">
    <property type="term" value="P:dorsal/ventral axis specification"/>
    <property type="evidence" value="ECO:0000314"/>
    <property type="project" value="MGI"/>
</dbReference>
<dbReference type="GO" id="GO:0009953">
    <property type="term" value="P:dorsal/ventral pattern formation"/>
    <property type="evidence" value="ECO:0000314"/>
    <property type="project" value="MGI"/>
</dbReference>
<dbReference type="GO" id="GO:0048048">
    <property type="term" value="P:embryonic eye morphogenesis"/>
    <property type="evidence" value="ECO:0000315"/>
    <property type="project" value="ZFIN"/>
</dbReference>
<dbReference type="GO" id="GO:0001654">
    <property type="term" value="P:eye development"/>
    <property type="evidence" value="ECO:0000315"/>
    <property type="project" value="ZFIN"/>
</dbReference>
<dbReference type="GO" id="GO:0031101">
    <property type="term" value="P:fin regeneration"/>
    <property type="evidence" value="ECO:0000315"/>
    <property type="project" value="ZFIN"/>
</dbReference>
<dbReference type="GO" id="GO:0021797">
    <property type="term" value="P:forebrain anterior/posterior pattern specification"/>
    <property type="evidence" value="ECO:0000315"/>
    <property type="project" value="ZFIN"/>
</dbReference>
<dbReference type="GO" id="GO:0030900">
    <property type="term" value="P:forebrain development"/>
    <property type="evidence" value="ECO:0000315"/>
    <property type="project" value="ZFIN"/>
</dbReference>
<dbReference type="GO" id="GO:0021877">
    <property type="term" value="P:forebrain neuron fate commitment"/>
    <property type="evidence" value="ECO:0000315"/>
    <property type="project" value="ZFIN"/>
</dbReference>
<dbReference type="GO" id="GO:0001743">
    <property type="term" value="P:lens placode formation"/>
    <property type="evidence" value="ECO:0000315"/>
    <property type="project" value="ZFIN"/>
</dbReference>
<dbReference type="GO" id="GO:0055001">
    <property type="term" value="P:muscle cell development"/>
    <property type="evidence" value="ECO:0000316"/>
    <property type="project" value="ZFIN"/>
</dbReference>
<dbReference type="GO" id="GO:0090090">
    <property type="term" value="P:negative regulation of canonical Wnt signaling pathway"/>
    <property type="evidence" value="ECO:0000314"/>
    <property type="project" value="UniProtKB"/>
</dbReference>
<dbReference type="GO" id="GO:0030178">
    <property type="term" value="P:negative regulation of Wnt signaling pathway"/>
    <property type="evidence" value="ECO:0000315"/>
    <property type="project" value="ZFIN"/>
</dbReference>
<dbReference type="GO" id="GO:0021999">
    <property type="term" value="P:neural plate anterior/posterior regionalization"/>
    <property type="evidence" value="ECO:0000315"/>
    <property type="project" value="ZFIN"/>
</dbReference>
<dbReference type="GO" id="GO:0060896">
    <property type="term" value="P:neural plate pattern specification"/>
    <property type="evidence" value="ECO:0000315"/>
    <property type="project" value="ZFIN"/>
</dbReference>
<dbReference type="GO" id="GO:0030910">
    <property type="term" value="P:olfactory placode formation"/>
    <property type="evidence" value="ECO:0000315"/>
    <property type="project" value="ZFIN"/>
</dbReference>
<dbReference type="GO" id="GO:0046330">
    <property type="term" value="P:positive regulation of JNK cascade"/>
    <property type="evidence" value="ECO:0000315"/>
    <property type="project" value="UniProtKB"/>
</dbReference>
<dbReference type="GO" id="GO:0043507">
    <property type="term" value="P:positive regulation of JUN kinase activity"/>
    <property type="evidence" value="ECO:0000314"/>
    <property type="project" value="MGI"/>
</dbReference>
<dbReference type="GO" id="GO:0032436">
    <property type="term" value="P:positive regulation of proteasomal ubiquitin-dependent protein catabolic process"/>
    <property type="evidence" value="ECO:0000318"/>
    <property type="project" value="GO_Central"/>
</dbReference>
<dbReference type="GO" id="GO:0046328">
    <property type="term" value="P:regulation of JNK cascade"/>
    <property type="evidence" value="ECO:0000314"/>
    <property type="project" value="ZFIN"/>
</dbReference>
<dbReference type="GO" id="GO:0001756">
    <property type="term" value="P:somitogenesis"/>
    <property type="evidence" value="ECO:0000316"/>
    <property type="project" value="ZFIN"/>
</dbReference>
<dbReference type="GO" id="GO:0090244">
    <property type="term" value="P:Wnt signaling pathway involved in somitogenesis"/>
    <property type="evidence" value="ECO:0000316"/>
    <property type="project" value="ZFIN"/>
</dbReference>
<dbReference type="CDD" id="cd11582">
    <property type="entry name" value="Axin_TNKS_binding"/>
    <property type="match status" value="1"/>
</dbReference>
<dbReference type="CDD" id="cd08707">
    <property type="entry name" value="RGS_Axin"/>
    <property type="match status" value="1"/>
</dbReference>
<dbReference type="FunFam" id="1.10.167.10:FF:000003">
    <property type="entry name" value="Axin 1"/>
    <property type="match status" value="1"/>
</dbReference>
<dbReference type="FunFam" id="1.10.196.10:FF:000002">
    <property type="entry name" value="Axin 1"/>
    <property type="match status" value="1"/>
</dbReference>
<dbReference type="FunFam" id="2.40.240.130:FF:000002">
    <property type="entry name" value="Axin 1"/>
    <property type="match status" value="1"/>
</dbReference>
<dbReference type="Gene3D" id="1.10.196.10">
    <property type="match status" value="2"/>
</dbReference>
<dbReference type="Gene3D" id="2.40.240.130">
    <property type="match status" value="1"/>
</dbReference>
<dbReference type="Gene3D" id="1.10.167.10">
    <property type="entry name" value="Regulator of G-protein Signalling 4, domain 2"/>
    <property type="match status" value="1"/>
</dbReference>
<dbReference type="InterPro" id="IPR043581">
    <property type="entry name" value="Axin-like"/>
</dbReference>
<dbReference type="InterPro" id="IPR014936">
    <property type="entry name" value="Axin_b-cat-bd"/>
</dbReference>
<dbReference type="InterPro" id="IPR032101">
    <property type="entry name" value="Axin_TNKS-bd"/>
</dbReference>
<dbReference type="InterPro" id="IPR001158">
    <property type="entry name" value="DIX"/>
</dbReference>
<dbReference type="InterPro" id="IPR038207">
    <property type="entry name" value="DIX_dom_sf"/>
</dbReference>
<dbReference type="InterPro" id="IPR016137">
    <property type="entry name" value="RGS"/>
</dbReference>
<dbReference type="InterPro" id="IPR036305">
    <property type="entry name" value="RGS_sf"/>
</dbReference>
<dbReference type="InterPro" id="IPR024066">
    <property type="entry name" value="RGS_subdom1/3"/>
</dbReference>
<dbReference type="InterPro" id="IPR044926">
    <property type="entry name" value="RGS_subdomain_2"/>
</dbReference>
<dbReference type="InterPro" id="IPR029071">
    <property type="entry name" value="Ubiquitin-like_domsf"/>
</dbReference>
<dbReference type="PANTHER" id="PTHR46102">
    <property type="entry name" value="AXIN"/>
    <property type="match status" value="1"/>
</dbReference>
<dbReference type="PANTHER" id="PTHR46102:SF3">
    <property type="entry name" value="AXIN-1"/>
    <property type="match status" value="1"/>
</dbReference>
<dbReference type="Pfam" id="PF16646">
    <property type="entry name" value="AXIN1_TNKS_BD"/>
    <property type="match status" value="1"/>
</dbReference>
<dbReference type="Pfam" id="PF08833">
    <property type="entry name" value="Axin_b-cat_bind"/>
    <property type="match status" value="1"/>
</dbReference>
<dbReference type="Pfam" id="PF00778">
    <property type="entry name" value="DIX"/>
    <property type="match status" value="1"/>
</dbReference>
<dbReference type="Pfam" id="PF00615">
    <property type="entry name" value="RGS"/>
    <property type="match status" value="1"/>
</dbReference>
<dbReference type="PRINTS" id="PR01301">
    <property type="entry name" value="RGSPROTEIN"/>
</dbReference>
<dbReference type="SMART" id="SM00021">
    <property type="entry name" value="DAX"/>
    <property type="match status" value="1"/>
</dbReference>
<dbReference type="SMART" id="SM00315">
    <property type="entry name" value="RGS"/>
    <property type="match status" value="1"/>
</dbReference>
<dbReference type="SUPFAM" id="SSF48097">
    <property type="entry name" value="Regulator of G-protein signaling, RGS"/>
    <property type="match status" value="1"/>
</dbReference>
<dbReference type="SUPFAM" id="SSF54236">
    <property type="entry name" value="Ubiquitin-like"/>
    <property type="match status" value="1"/>
</dbReference>
<dbReference type="PROSITE" id="PS50841">
    <property type="entry name" value="DIX"/>
    <property type="match status" value="1"/>
</dbReference>
<dbReference type="PROSITE" id="PS50132">
    <property type="entry name" value="RGS"/>
    <property type="match status" value="1"/>
</dbReference>
<evidence type="ECO:0000250" key="1"/>
<evidence type="ECO:0000250" key="2">
    <source>
        <dbReference type="UniProtKB" id="O15169"/>
    </source>
</evidence>
<evidence type="ECO:0000250" key="3">
    <source>
        <dbReference type="UniProtKB" id="O35625"/>
    </source>
</evidence>
<evidence type="ECO:0000255" key="4">
    <source>
        <dbReference type="PROSITE-ProRule" id="PRU00069"/>
    </source>
</evidence>
<evidence type="ECO:0000255" key="5">
    <source>
        <dbReference type="PROSITE-ProRule" id="PRU00171"/>
    </source>
</evidence>
<evidence type="ECO:0000256" key="6">
    <source>
        <dbReference type="SAM" id="MobiDB-lite"/>
    </source>
</evidence>
<evidence type="ECO:0000269" key="7">
    <source>
    </source>
</evidence>
<evidence type="ECO:0000269" key="8">
    <source>
    </source>
</evidence>
<evidence type="ECO:0000269" key="9">
    <source>
    </source>
</evidence>
<evidence type="ECO:0000305" key="10"/>
<evidence type="ECO:0000305" key="11">
    <source>
    </source>
</evidence>
<protein>
    <recommendedName>
        <fullName>Axin-1</fullName>
    </recommendedName>
    <alternativeName>
        <fullName>Axis inhibition protein 1</fullName>
    </alternativeName>
</protein>
<reference key="1">
    <citation type="journal article" date="2000" name="Mech. Dev.">
        <title>Cooperative roles of Bozozok/Dharma and Nodal-related proteins in the formation of the dorsal organizer in zebrafish.</title>
        <authorList>
            <person name="Shimizu T."/>
            <person name="Yamanaka Y."/>
            <person name="Ryu S.-L."/>
            <person name="Hashimoto H."/>
            <person name="Yabe T."/>
            <person name="Hirata T."/>
            <person name="Bae Y.-K."/>
            <person name="Hibi M."/>
            <person name="Hirano T."/>
        </authorList>
    </citation>
    <scope>NUCLEOTIDE SEQUENCE [MRNA]</scope>
</reference>
<reference key="2">
    <citation type="submission" date="2005-07" db="EMBL/GenBank/DDBJ databases">
        <authorList>
            <consortium name="NIH - Zebrafish Gene Collection (ZGC) project"/>
        </authorList>
    </citation>
    <scope>NUCLEOTIDE SEQUENCE [LARGE SCALE MRNA]</scope>
    <source>
        <strain>AB</strain>
    </source>
</reference>
<reference key="3">
    <citation type="journal article" date="2003" name="Curr. Biol.">
        <title>Ccd1, a novel protein with a DIX domain, is a positive regulator in the Wnt signaling during zebrafish neural patterning.</title>
        <authorList>
            <person name="Shiomi K."/>
            <person name="Uchida H."/>
            <person name="Keino-Masu K."/>
            <person name="Masu M."/>
        </authorList>
    </citation>
    <scope>INTERACTION WITH DIXDC1</scope>
</reference>
<reference key="4">
    <citation type="journal article" date="2007" name="Dev. Cell">
        <title>A beta-catenin-independent dorsalization pathway activated by Axin/JNK signaling and antagonized by aida.</title>
        <authorList>
            <person name="Rui Y."/>
            <person name="Xu Z."/>
            <person name="Xiong B."/>
            <person name="Cao Y."/>
            <person name="Lin S."/>
            <person name="Zhang M."/>
            <person name="Chan S.-C."/>
            <person name="Luo W."/>
            <person name="Han Y."/>
            <person name="Lu Z."/>
            <person name="Ye Z."/>
            <person name="Zhou H.-M."/>
            <person name="Han J."/>
            <person name="Meng A."/>
            <person name="Lin S.-C."/>
        </authorList>
    </citation>
    <scope>FUNCTION</scope>
</reference>
<reference key="5">
    <citation type="journal article" date="2018" name="Science">
        <title>Maternal Huluwa dictates the embryonic body axis through beta-catenin in vertebrates.</title>
        <authorList>
            <person name="Yan L."/>
            <person name="Chen J."/>
            <person name="Zhu X."/>
            <person name="Sun J."/>
            <person name="Wu X."/>
            <person name="Shen W."/>
            <person name="Zhang W."/>
            <person name="Tao Q."/>
            <person name="Meng A."/>
        </authorList>
    </citation>
    <scope>FUNCTION</scope>
    <scope>INTERACTION WITH HWA</scope>
</reference>